<reference key="1">
    <citation type="journal article" date="1992" name="J. Gen. Virol.">
        <title>Complete nucleotide sequences of two soybean mosaic virus strains differentiated by response of soybean containing the Rsv resistance gene.</title>
        <authorList>
            <person name="Jayaram C."/>
            <person name="Hill J.H."/>
            <person name="Miller W.A."/>
        </authorList>
    </citation>
    <scope>NUCLEOTIDE SEQUENCE [GENOMIC RNA]</scope>
</reference>
<protein>
    <recommendedName>
        <fullName>P3N-PIPO polyprotein</fullName>
    </recommendedName>
    <component>
        <recommendedName>
            <fullName>P1 protease</fullName>
            <ecNumber>3.4.21.-</ecNumber>
        </recommendedName>
        <alternativeName>
            <fullName>N-terminal protein</fullName>
        </alternativeName>
        <alternativeName>
            <fullName>P1 proteinase</fullName>
        </alternativeName>
    </component>
    <component>
        <recommendedName>
            <fullName>Helper component proteinase</fullName>
            <shortName>HC-pro</shortName>
            <ecNumber>3.4.22.45</ecNumber>
        </recommendedName>
    </component>
    <component>
        <recommendedName>
            <fullName>Movement protein P3N-PIPO</fullName>
        </recommendedName>
        <alternativeName>
            <fullName>Pretty interesting potyviridae ORF</fullName>
            <shortName>PIPO</shortName>
        </alternativeName>
    </component>
</protein>
<keyword id="KW-1031">Host cell junction</keyword>
<keyword id="KW-0945">Host-virus interaction</keyword>
<keyword id="KW-0378">Hydrolase</keyword>
<keyword id="KW-1090">Inhibition of host innate immune response by virus</keyword>
<keyword id="KW-0645">Protease</keyword>
<keyword id="KW-0688">Ribosomal frameshifting</keyword>
<keyword id="KW-0720">Serine protease</keyword>
<keyword id="KW-0941">Suppressor of RNA silencing</keyword>
<keyword id="KW-0813">Transport</keyword>
<keyword id="KW-0899">Viral immunoevasion</keyword>
<keyword id="KW-0916">Viral movement protein</keyword>
<comment type="function">
    <molecule>Helper component proteinase</molecule>
    <text evidence="2">Required for aphid transmission and also has proteolytic activity. Only cleaves a Gly-Gly dipeptide at its own C-terminus. Interacts with virions and aphid stylets. Acts as a suppressor of RNA-mediated gene silencing, also known as post-transcriptional gene silencing (PTGS), a mechanism of plant viral defense that limits the accumulation of viral RNAs. May have RNA-binding activity.</text>
</comment>
<comment type="function">
    <molecule>Movement protein P3N-PIPO</molecule>
    <text evidence="3">Allows efficient cell to cell propagation, by bypassing the host cell wall barrier. Transports viral genome to neighboring plant cells directly through plasmosdesmata, without any budding.</text>
</comment>
<comment type="catalytic activity">
    <molecule>Helper component proteinase</molecule>
    <reaction>
        <text>Hydrolyzes a Gly-|-Gly bond at its own C-terminus, commonly in the sequence -Tyr-Xaa-Val-Gly-|-Gly, in the processing of the potyviral polyprotein.</text>
        <dbReference type="EC" id="3.4.22.45"/>
    </reaction>
</comment>
<comment type="subunit">
    <molecule>Movement protein P3N-PIPO</molecule>
    <text evidence="3">Interacts (via PIPO domain) with host PCaP1 protein; this interaction may help to anchor the movement complex to the plasma membrane from which the complex could move to the plasmodesmata.</text>
</comment>
<comment type="subcellular location">
    <molecule>Movement protein P3N-PIPO</molecule>
    <subcellularLocation>
        <location evidence="3">Host cell junction</location>
        <location evidence="3">Host plasmodesma</location>
    </subcellularLocation>
</comment>
<comment type="alternative products">
    <event type="ribosomal frameshifting"/>
    <isoform>
        <id>P0CK07-1</id>
        <name>P3N-PIPO polyprotein</name>
        <sequence type="displayed"/>
    </isoform>
    <isoform>
        <id>Q90069-1</id>
        <name>Genome polyprotein</name>
        <sequence type="external"/>
    </isoform>
</comment>
<comment type="domain">
    <text evidence="1">The N-terminus of helper component proteinase is involved in interaction with stylets. The central part is involved in interaction with virions and the C-terminus is involved in cell-to cell movement of the virus (By similarity).</text>
</comment>
<comment type="PTM">
    <text evidence="1">Potyviral RNA is expressed as two polyproteins which undergo post-translational proteolytic processing. Genome polyprotein is processed by NIa-pro, P1 and HC-pro proteinases resulting in the production of at least ten individual proteins. P3N-PIPO is cleaved by P1 and HC-pro proteinases resulting in the production of three individual proteins. The P1 proteinase and the HC-pro cleave only their respective C-termini autocatalytically (By similarity).</text>
</comment>
<comment type="miscellaneous">
    <molecule>Isoform P3N-PIPO polyprotein</molecule>
    <text>Produced by -1 ribosomal frameshifting in P3 ORF.</text>
</comment>
<comment type="similarity">
    <text evidence="7">Belongs to the potyviridae P3N-PIPO polyprotein family.</text>
</comment>
<proteinExistence type="inferred from homology"/>
<organism>
    <name type="scientific">Soybean mosaic virus (strain G2)</name>
    <name type="common">SMV</name>
    <dbReference type="NCBI Taxonomy" id="103931"/>
    <lineage>
        <taxon>Viruses</taxon>
        <taxon>Riboviria</taxon>
        <taxon>Orthornavirae</taxon>
        <taxon>Pisuviricota</taxon>
        <taxon>Stelpaviricetes</taxon>
        <taxon>Patatavirales</taxon>
        <taxon>Potyviridae</taxon>
        <taxon>Potyvirus</taxon>
        <taxon>Potyvirus glycitessellati</taxon>
        <taxon>Soybean mosaic virus</taxon>
    </lineage>
</organism>
<dbReference type="EC" id="3.4.21.-"/>
<dbReference type="EC" id="3.4.22.45"/>
<dbReference type="EMBL" id="S42280">
    <property type="status" value="NOT_ANNOTATED_CDS"/>
    <property type="molecule type" value="Genomic_RNA"/>
</dbReference>
<dbReference type="SMR" id="P0CK07"/>
<dbReference type="Proteomes" id="UP000007189">
    <property type="component" value="Genome"/>
</dbReference>
<dbReference type="GO" id="GO:0044219">
    <property type="term" value="C:host cell plasmodesma"/>
    <property type="evidence" value="ECO:0007669"/>
    <property type="project" value="UniProtKB-SubCell"/>
</dbReference>
<dbReference type="GO" id="GO:0004197">
    <property type="term" value="F:cysteine-type endopeptidase activity"/>
    <property type="evidence" value="ECO:0007669"/>
    <property type="project" value="InterPro"/>
</dbReference>
<dbReference type="GO" id="GO:0008236">
    <property type="term" value="F:serine-type peptidase activity"/>
    <property type="evidence" value="ECO:0007669"/>
    <property type="project" value="UniProtKB-KW"/>
</dbReference>
<dbReference type="GO" id="GO:0006508">
    <property type="term" value="P:proteolysis"/>
    <property type="evidence" value="ECO:0007669"/>
    <property type="project" value="UniProtKB-KW"/>
</dbReference>
<dbReference type="GO" id="GO:0052170">
    <property type="term" value="P:symbiont-mediated suppression of host innate immune response"/>
    <property type="evidence" value="ECO:0007669"/>
    <property type="project" value="UniProtKB-KW"/>
</dbReference>
<dbReference type="GO" id="GO:0046740">
    <property type="term" value="P:transport of virus in host, cell to cell"/>
    <property type="evidence" value="ECO:0007669"/>
    <property type="project" value="UniProtKB-KW"/>
</dbReference>
<dbReference type="GO" id="GO:0075523">
    <property type="term" value="P:viral translational frameshifting"/>
    <property type="evidence" value="ECO:0007669"/>
    <property type="project" value="UniProtKB-KW"/>
</dbReference>
<dbReference type="Gene3D" id="3.90.70.150">
    <property type="entry name" value="Helper component proteinase"/>
    <property type="match status" value="1"/>
</dbReference>
<dbReference type="InterPro" id="IPR001456">
    <property type="entry name" value="HC-pro"/>
</dbReference>
<dbReference type="InterPro" id="IPR031159">
    <property type="entry name" value="HC_PRO_CPD_dom"/>
</dbReference>
<dbReference type="InterPro" id="IPR042308">
    <property type="entry name" value="HC_PRO_CPD_sf"/>
</dbReference>
<dbReference type="InterPro" id="IPR002540">
    <property type="entry name" value="Pept_S30_P1_potyvir"/>
</dbReference>
<dbReference type="InterPro" id="IPR039560">
    <property type="entry name" value="Potyvirid-P3"/>
</dbReference>
<dbReference type="Pfam" id="PF00851">
    <property type="entry name" value="Peptidase_C6"/>
    <property type="match status" value="1"/>
</dbReference>
<dbReference type="Pfam" id="PF01577">
    <property type="entry name" value="Peptidase_S30"/>
    <property type="match status" value="1"/>
</dbReference>
<dbReference type="Pfam" id="PF13608">
    <property type="entry name" value="Potyvirid-P3"/>
    <property type="match status" value="1"/>
</dbReference>
<dbReference type="PROSITE" id="PS51744">
    <property type="entry name" value="HC_PRO_CPD"/>
    <property type="match status" value="1"/>
</dbReference>
<dbReference type="PROSITE" id="PS51871">
    <property type="entry name" value="PV_P1_PRO"/>
    <property type="match status" value="1"/>
</dbReference>
<accession>P0CK07</accession>
<name>MVP_SBMVG</name>
<feature type="chain" id="PRO_0000420087" description="P3N-PIPO polyprotein">
    <location>
        <begin position="1"/>
        <end position="992"/>
    </location>
</feature>
<feature type="chain" id="PRO_0000420088" description="P1 protease" evidence="4">
    <location>
        <begin position="1"/>
        <end position="308"/>
    </location>
</feature>
<feature type="chain" id="PRO_0000420089" description="Helper component proteinase" evidence="4">
    <location>
        <begin position="309"/>
        <end position="765"/>
    </location>
</feature>
<feature type="chain" id="PRO_0000408551" description="Movement protein P3N-PIPO">
    <location>
        <begin position="766"/>
        <end position="992"/>
    </location>
</feature>
<feature type="domain" description="Peptidase S30" evidence="6">
    <location>
        <begin position="168"/>
        <end position="308"/>
    </location>
</feature>
<feature type="domain" description="Peptidase C6" evidence="5">
    <location>
        <begin position="643"/>
        <end position="765"/>
    </location>
</feature>
<feature type="short sequence motif" description="Involved in interaction with stylet and aphid transmission" evidence="1">
    <location>
        <begin position="361"/>
        <end position="364"/>
    </location>
</feature>
<feature type="short sequence motif" description="Involved in virions binding and aphid transmission" evidence="1">
    <location>
        <begin position="617"/>
        <end position="619"/>
    </location>
</feature>
<feature type="active site" description="For P1 proteinase activity" evidence="6">
    <location>
        <position position="221"/>
    </location>
</feature>
<feature type="active site" description="For P1 proteinase activity" evidence="6">
    <location>
        <position position="230"/>
    </location>
</feature>
<feature type="active site" description="For P1 proteinase activity" evidence="6">
    <location>
        <position position="262"/>
    </location>
</feature>
<feature type="active site" description="For helper component proteinase activity" evidence="5">
    <location>
        <position position="651"/>
    </location>
</feature>
<feature type="active site" description="For helper component proteinase activity" evidence="5">
    <location>
        <position position="724"/>
    </location>
</feature>
<feature type="site" description="Cleavage; by P1 proteinase" evidence="6">
    <location>
        <begin position="308"/>
        <end position="309"/>
    </location>
</feature>
<feature type="site" description="Cleavage; by autolysis" evidence="5">
    <location>
        <begin position="765"/>
        <end position="766"/>
    </location>
</feature>
<feature type="unsure residue">
    <location>
        <begin position="916"/>
        <end position="922"/>
    </location>
</feature>
<sequence>MATIMIGSMAISVPNTHVSRASNSVMPVQAVQMAKQVPSARGVLYTLKREGSTQVIKHEEALRKFQEAFDQDVGIQRRLLVNKHSSIQSTKEGWFDLASLNFRAGSSKEAAIARRKQEEEDFLNGKYEQQFYAGVSATKSMKFEGGSVGFRTKYWRPTPKKTKERRATSQCRKPTYVLEEVLSIASKSGKLVEFITGKGKRVKVCYVRKHGAILPKFSLPHEEGKYIHQELQYASTYEFLPYICMFAKYKSINADDITYGDSGLLFDERSSLTTNHTKLPYFVVRGRRNGKLVNALEVVENMEDIQHYSQNPEAQFFRGWKKVFDKMPPHVENHECTIDFTNEQCGELAAAISQSIFPVKKLSCKQCRQHIKHLSWEEYKQFLLAHMGCHGAEWETFQEIDGMRYVKRVIETSTAENASLQTSLEIVRLTQNYKSTHMLQIQDINKALMKGPSVTQSELEQASKQLLAMTQWWKNHMALTDEDALKVFRNKRSSKALLNPSLLCDNQLDKNGNFVWGERGRHSKRFFANYFEEVVPSEGYSKYVIRTNPNGQRELAIGSLIVPLDFERARMALQGKSVTREPITMSCISRQDGNFVYPCCCVTHDDGKAFYSELKSPTKRHLVIGTSGDPKYIDLPATDADRMYIAKEGFCYLNIFLAMLVNVNEDEAKDFTKMVRDVIVPRLGKWPTMLDVATAAYMLTVFHPETRNAELPRILVDHACQTMHVIDSFGSLTVGYHVLKAGTVNQLIQFASNDLQSEMKFYRVGGEVQQRMKCETALITSIFKPKRMIQILENDPYILLMGLVSPSILIHMYRMKHFEKGVELWISKEHSVAKIFIILGQLTKRVAANDVLLEQLEMISETSERFMSILEDCPQAPHSYKTAKDLLTMYIEGKASNNQLVENGFVDMNDKLYMAYEKNLLRSLEAGMARIKLVGKIFYNMAIEKICSTYGEMFDKESCRRKQRIFRKLCECVLHECPVTPKKCKKYTFPKM</sequence>
<organismHost>
    <name type="scientific">Glycine max</name>
    <name type="common">Soybean</name>
    <name type="synonym">Glycine hispida</name>
    <dbReference type="NCBI Taxonomy" id="3847"/>
</organismHost>
<evidence type="ECO:0000250" key="1"/>
<evidence type="ECO:0000250" key="2">
    <source>
        <dbReference type="UniProtKB" id="P04517"/>
    </source>
</evidence>
<evidence type="ECO:0000250" key="3">
    <source>
        <dbReference type="UniProtKB" id="P0CK11"/>
    </source>
</evidence>
<evidence type="ECO:0000255" key="4"/>
<evidence type="ECO:0000255" key="5">
    <source>
        <dbReference type="PROSITE-ProRule" id="PRU01080"/>
    </source>
</evidence>
<evidence type="ECO:0000255" key="6">
    <source>
        <dbReference type="PROSITE-ProRule" id="PRU01219"/>
    </source>
</evidence>
<evidence type="ECO:0000305" key="7"/>